<accession>O64800</accession>
<accession>F4HTL7</accession>
<proteinExistence type="predicted"/>
<organism>
    <name type="scientific">Arabidopsis thaliana</name>
    <name type="common">Mouse-ear cress</name>
    <dbReference type="NCBI Taxonomy" id="3702"/>
    <lineage>
        <taxon>Eukaryota</taxon>
        <taxon>Viridiplantae</taxon>
        <taxon>Streptophyta</taxon>
        <taxon>Embryophyta</taxon>
        <taxon>Tracheophyta</taxon>
        <taxon>Spermatophyta</taxon>
        <taxon>Magnoliopsida</taxon>
        <taxon>eudicotyledons</taxon>
        <taxon>Gunneridae</taxon>
        <taxon>Pentapetalae</taxon>
        <taxon>rosids</taxon>
        <taxon>malvids</taxon>
        <taxon>Brassicales</taxon>
        <taxon>Brassicaceae</taxon>
        <taxon>Camelineae</taxon>
        <taxon>Arabidopsis</taxon>
    </lineage>
</organism>
<name>FB344_ARATH</name>
<protein>
    <recommendedName>
        <fullName>Probable F-box protein At1g67455</fullName>
    </recommendedName>
</protein>
<comment type="sequence caution" evidence="1">
    <conflict type="erroneous gene model prediction">
        <sequence resource="EMBL-CDS" id="AAC18790"/>
    </conflict>
</comment>
<comment type="sequence caution" evidence="1">
    <conflict type="erroneous gene model prediction">
        <sequence resource="EMBL-CDS" id="AEE34648"/>
    </conflict>
</comment>
<dbReference type="EMBL" id="AC004393">
    <property type="protein sequence ID" value="AAC18790.1"/>
    <property type="status" value="ALT_SEQ"/>
    <property type="molecule type" value="Genomic_DNA"/>
</dbReference>
<dbReference type="EMBL" id="CP002684">
    <property type="protein sequence ID" value="AEE34648.1"/>
    <property type="status" value="ALT_SEQ"/>
    <property type="molecule type" value="Genomic_DNA"/>
</dbReference>
<dbReference type="PIR" id="T02160">
    <property type="entry name" value="T02160"/>
</dbReference>
<dbReference type="RefSeq" id="NP_683479.1">
    <property type="nucleotide sequence ID" value="NM_148638.1"/>
</dbReference>
<dbReference type="GlyGen" id="O64800">
    <property type="glycosylation" value="1 site"/>
</dbReference>
<dbReference type="GeneID" id="843066"/>
<dbReference type="KEGG" id="ath:AT1G67455"/>
<dbReference type="Araport" id="AT1G67455"/>
<dbReference type="TAIR" id="AT1G67455"/>
<dbReference type="InParanoid" id="O64800"/>
<dbReference type="PRO" id="PR:O64800"/>
<dbReference type="Proteomes" id="UP000006548">
    <property type="component" value="Chromosome 1"/>
</dbReference>
<dbReference type="InterPro" id="IPR006527">
    <property type="entry name" value="F-box-assoc_dom_typ1"/>
</dbReference>
<dbReference type="InterPro" id="IPR036047">
    <property type="entry name" value="F-box-like_dom_sf"/>
</dbReference>
<dbReference type="Pfam" id="PF07734">
    <property type="entry name" value="FBA_1"/>
    <property type="match status" value="1"/>
</dbReference>
<dbReference type="SUPFAM" id="SSF81383">
    <property type="entry name" value="F-box domain"/>
    <property type="match status" value="1"/>
</dbReference>
<sequence>MMISDLPEDMVEEILSRVSIISLGALRWNDLSKARVICKAEARQQFAGFMIKGSKVCSMRFDLHGIQNNNVEVVEPSIKQIAKFNHVEISQVFHCDGLLLMMSKEVSNTRLVVWNPYLGKIWSIQHRSAYHSENRYTLGYDNNRKPQNLEVAYHSIKGITYLFNGGEKIGEGPTGCLLCFDFTRERFGPSLPLPFHVAHLYTEQLAVLLHNWGAFAMEIWVTTNIEPNAVLMEQLLKNYLLYTSDFIGSFFIDQEKKHAVIFDSSLSCGSVACIIGETGNLRTVDLGVAAVPYRQLPVCSYAPSLEQINQGQELPLIGLTQIFMEQHKYWVSTFLDNLITKYG</sequence>
<evidence type="ECO:0000305" key="1"/>
<gene>
    <name type="ordered locus">At1g67455</name>
    <name type="ORF">T1F15.8</name>
</gene>
<keyword id="KW-1185">Reference proteome</keyword>
<reference key="1">
    <citation type="journal article" date="2000" name="Nature">
        <title>Sequence and analysis of chromosome 1 of the plant Arabidopsis thaliana.</title>
        <authorList>
            <person name="Theologis A."/>
            <person name="Ecker J.R."/>
            <person name="Palm C.J."/>
            <person name="Federspiel N.A."/>
            <person name="Kaul S."/>
            <person name="White O."/>
            <person name="Alonso J."/>
            <person name="Altafi H."/>
            <person name="Araujo R."/>
            <person name="Bowman C.L."/>
            <person name="Brooks S.Y."/>
            <person name="Buehler E."/>
            <person name="Chan A."/>
            <person name="Chao Q."/>
            <person name="Chen H."/>
            <person name="Cheuk R.F."/>
            <person name="Chin C.W."/>
            <person name="Chung M.K."/>
            <person name="Conn L."/>
            <person name="Conway A.B."/>
            <person name="Conway A.R."/>
            <person name="Creasy T.H."/>
            <person name="Dewar K."/>
            <person name="Dunn P."/>
            <person name="Etgu P."/>
            <person name="Feldblyum T.V."/>
            <person name="Feng J.-D."/>
            <person name="Fong B."/>
            <person name="Fujii C.Y."/>
            <person name="Gill J.E."/>
            <person name="Goldsmith A.D."/>
            <person name="Haas B."/>
            <person name="Hansen N.F."/>
            <person name="Hughes B."/>
            <person name="Huizar L."/>
            <person name="Hunter J.L."/>
            <person name="Jenkins J."/>
            <person name="Johnson-Hopson C."/>
            <person name="Khan S."/>
            <person name="Khaykin E."/>
            <person name="Kim C.J."/>
            <person name="Koo H.L."/>
            <person name="Kremenetskaia I."/>
            <person name="Kurtz D.B."/>
            <person name="Kwan A."/>
            <person name="Lam B."/>
            <person name="Langin-Hooper S."/>
            <person name="Lee A."/>
            <person name="Lee J.M."/>
            <person name="Lenz C.A."/>
            <person name="Li J.H."/>
            <person name="Li Y.-P."/>
            <person name="Lin X."/>
            <person name="Liu S.X."/>
            <person name="Liu Z.A."/>
            <person name="Luros J.S."/>
            <person name="Maiti R."/>
            <person name="Marziali A."/>
            <person name="Militscher J."/>
            <person name="Miranda M."/>
            <person name="Nguyen M."/>
            <person name="Nierman W.C."/>
            <person name="Osborne B.I."/>
            <person name="Pai G."/>
            <person name="Peterson J."/>
            <person name="Pham P.K."/>
            <person name="Rizzo M."/>
            <person name="Rooney T."/>
            <person name="Rowley D."/>
            <person name="Sakano H."/>
            <person name="Salzberg S.L."/>
            <person name="Schwartz J.R."/>
            <person name="Shinn P."/>
            <person name="Southwick A.M."/>
            <person name="Sun H."/>
            <person name="Tallon L.J."/>
            <person name="Tambunga G."/>
            <person name="Toriumi M.J."/>
            <person name="Town C.D."/>
            <person name="Utterback T."/>
            <person name="Van Aken S."/>
            <person name="Vaysberg M."/>
            <person name="Vysotskaia V.S."/>
            <person name="Walker M."/>
            <person name="Wu D."/>
            <person name="Yu G."/>
            <person name="Fraser C.M."/>
            <person name="Venter J.C."/>
            <person name="Davis R.W."/>
        </authorList>
    </citation>
    <scope>NUCLEOTIDE SEQUENCE [LARGE SCALE GENOMIC DNA]</scope>
    <source>
        <strain>cv. Columbia</strain>
    </source>
</reference>
<reference key="2">
    <citation type="journal article" date="2017" name="Plant J.">
        <title>Araport11: a complete reannotation of the Arabidopsis thaliana reference genome.</title>
        <authorList>
            <person name="Cheng C.Y."/>
            <person name="Krishnakumar V."/>
            <person name="Chan A.P."/>
            <person name="Thibaud-Nissen F."/>
            <person name="Schobel S."/>
            <person name="Town C.D."/>
        </authorList>
    </citation>
    <scope>GENOME REANNOTATION</scope>
    <source>
        <strain>cv. Columbia</strain>
    </source>
</reference>
<feature type="chain" id="PRO_0000396060" description="Probable F-box protein At1g67455">
    <location>
        <begin position="1"/>
        <end position="343"/>
    </location>
</feature>
<feature type="domain" description="F-box">
    <location>
        <begin position="1"/>
        <end position="46"/>
    </location>
</feature>